<dbReference type="EMBL" id="AL766846">
    <property type="protein sequence ID" value="CAD46225.1"/>
    <property type="molecule type" value="Genomic_DNA"/>
</dbReference>
<dbReference type="RefSeq" id="WP_000710757.1">
    <property type="nucleotide sequence ID" value="NC_004368.1"/>
</dbReference>
<dbReference type="SMR" id="P66198"/>
<dbReference type="KEGG" id="san:gbs0581"/>
<dbReference type="eggNOG" id="COG0254">
    <property type="taxonomic scope" value="Bacteria"/>
</dbReference>
<dbReference type="HOGENOM" id="CLU_114306_2_1_9"/>
<dbReference type="Proteomes" id="UP000000823">
    <property type="component" value="Chromosome"/>
</dbReference>
<dbReference type="GO" id="GO:1990904">
    <property type="term" value="C:ribonucleoprotein complex"/>
    <property type="evidence" value="ECO:0007669"/>
    <property type="project" value="UniProtKB-KW"/>
</dbReference>
<dbReference type="GO" id="GO:0005840">
    <property type="term" value="C:ribosome"/>
    <property type="evidence" value="ECO:0007669"/>
    <property type="project" value="UniProtKB-KW"/>
</dbReference>
<dbReference type="GO" id="GO:0003735">
    <property type="term" value="F:structural constituent of ribosome"/>
    <property type="evidence" value="ECO:0007669"/>
    <property type="project" value="InterPro"/>
</dbReference>
<dbReference type="GO" id="GO:0006412">
    <property type="term" value="P:translation"/>
    <property type="evidence" value="ECO:0007669"/>
    <property type="project" value="UniProtKB-UniRule"/>
</dbReference>
<dbReference type="Gene3D" id="4.10.830.30">
    <property type="entry name" value="Ribosomal protein L31"/>
    <property type="match status" value="1"/>
</dbReference>
<dbReference type="HAMAP" id="MF_00502">
    <property type="entry name" value="Ribosomal_bL31_2"/>
    <property type="match status" value="1"/>
</dbReference>
<dbReference type="InterPro" id="IPR034704">
    <property type="entry name" value="Ribosomal_bL28/bL31-like_sf"/>
</dbReference>
<dbReference type="InterPro" id="IPR002150">
    <property type="entry name" value="Ribosomal_bL31"/>
</dbReference>
<dbReference type="InterPro" id="IPR027493">
    <property type="entry name" value="Ribosomal_bL31_B"/>
</dbReference>
<dbReference type="InterPro" id="IPR042105">
    <property type="entry name" value="Ribosomal_bL31_sf"/>
</dbReference>
<dbReference type="NCBIfam" id="TIGR00105">
    <property type="entry name" value="L31"/>
    <property type="match status" value="1"/>
</dbReference>
<dbReference type="NCBIfam" id="NF002462">
    <property type="entry name" value="PRK01678.1"/>
    <property type="match status" value="1"/>
</dbReference>
<dbReference type="PANTHER" id="PTHR33280">
    <property type="entry name" value="50S RIBOSOMAL PROTEIN L31, CHLOROPLASTIC"/>
    <property type="match status" value="1"/>
</dbReference>
<dbReference type="PANTHER" id="PTHR33280:SF1">
    <property type="entry name" value="LARGE RIBOSOMAL SUBUNIT PROTEIN BL31C"/>
    <property type="match status" value="1"/>
</dbReference>
<dbReference type="Pfam" id="PF01197">
    <property type="entry name" value="Ribosomal_L31"/>
    <property type="match status" value="1"/>
</dbReference>
<dbReference type="PRINTS" id="PR01249">
    <property type="entry name" value="RIBOSOMALL31"/>
</dbReference>
<dbReference type="SUPFAM" id="SSF143800">
    <property type="entry name" value="L28p-like"/>
    <property type="match status" value="1"/>
</dbReference>
<dbReference type="PROSITE" id="PS01143">
    <property type="entry name" value="RIBOSOMAL_L31"/>
    <property type="match status" value="1"/>
</dbReference>
<proteinExistence type="inferred from homology"/>
<evidence type="ECO:0000255" key="1">
    <source>
        <dbReference type="HAMAP-Rule" id="MF_00502"/>
    </source>
</evidence>
<evidence type="ECO:0000305" key="2"/>
<feature type="chain" id="PRO_0000173263" description="Large ribosomal subunit protein bL31B">
    <location>
        <begin position="1"/>
        <end position="86"/>
    </location>
</feature>
<keyword id="KW-0687">Ribonucleoprotein</keyword>
<keyword id="KW-0689">Ribosomal protein</keyword>
<gene>
    <name evidence="1" type="primary">rpmE2</name>
    <name type="ordered locus">gbs0581</name>
</gene>
<organism>
    <name type="scientific">Streptococcus agalactiae serotype III (strain NEM316)</name>
    <dbReference type="NCBI Taxonomy" id="211110"/>
    <lineage>
        <taxon>Bacteria</taxon>
        <taxon>Bacillati</taxon>
        <taxon>Bacillota</taxon>
        <taxon>Bacilli</taxon>
        <taxon>Lactobacillales</taxon>
        <taxon>Streptococcaceae</taxon>
        <taxon>Streptococcus</taxon>
    </lineage>
</organism>
<comment type="subunit">
    <text evidence="1">Part of the 50S ribosomal subunit.</text>
</comment>
<comment type="similarity">
    <text evidence="1">Belongs to the bacterial ribosomal protein bL31 family. Type B subfamily.</text>
</comment>
<reference key="1">
    <citation type="journal article" date="2002" name="Mol. Microbiol.">
        <title>Genome sequence of Streptococcus agalactiae, a pathogen causing invasive neonatal disease.</title>
        <authorList>
            <person name="Glaser P."/>
            <person name="Rusniok C."/>
            <person name="Buchrieser C."/>
            <person name="Chevalier F."/>
            <person name="Frangeul L."/>
            <person name="Msadek T."/>
            <person name="Zouine M."/>
            <person name="Couve E."/>
            <person name="Lalioui L."/>
            <person name="Poyart C."/>
            <person name="Trieu-Cuot P."/>
            <person name="Kunst F."/>
        </authorList>
    </citation>
    <scope>NUCLEOTIDE SEQUENCE [LARGE SCALE GENOMIC DNA]</scope>
    <source>
        <strain>NEM316</strain>
    </source>
</reference>
<accession>P66198</accession>
<accession>Q8E127</accession>
<accession>Q8E6I2</accession>
<protein>
    <recommendedName>
        <fullName evidence="1">Large ribosomal subunit protein bL31B</fullName>
    </recommendedName>
    <alternativeName>
        <fullName evidence="2">50S ribosomal protein L31 type B</fullName>
    </alternativeName>
</protein>
<sequence>MKKDIHPDYRPVVFLDTTTGYKFLSGSTKSTKETVEFEGETYPLIRVEISSDSHPFYTGRQKFTQADGRVDRFNKKYGLKDANAAQ</sequence>
<name>RL31B_STRA3</name>